<sequence length="217" mass="24671">MPDCLETGEKLFVHNMNAQCVQKPEEGNGPLGTGGKIVQGKCFRIISTVSPVKLYCCYGVIMVLTVAVIALSVALSTKKTEQIIINKTYAACSKNWTGVGNKCFYFSGYPRNWTFAQAFCMAQEAQLARFDNEEELIFLKRFKGDFDCWIGLHRESSEHPWKWTNNTEYNNMNPILGVGRYAYLSSDRISSSRSYINRMWICSKLNNYNLHCQTPPV</sequence>
<dbReference type="EMBL" id="AF350411">
    <property type="protein sequence ID" value="AAK70359.1"/>
    <property type="status" value="ALT_INIT"/>
    <property type="molecule type" value="mRNA"/>
</dbReference>
<dbReference type="EMBL" id="AY137343">
    <property type="protein sequence ID" value="AAN15951.1"/>
    <property type="molecule type" value="Genomic_DNA"/>
</dbReference>
<dbReference type="EMBL" id="AY137343">
    <property type="protein sequence ID" value="AAN15952.1"/>
    <property type="molecule type" value="Genomic_DNA"/>
</dbReference>
<dbReference type="EMBL" id="AY137344">
    <property type="protein sequence ID" value="AAN15953.1"/>
    <property type="molecule type" value="mRNA"/>
</dbReference>
<dbReference type="EMBL" id="AY137345">
    <property type="protein sequence ID" value="AAN15954.1"/>
    <property type="molecule type" value="mRNA"/>
</dbReference>
<dbReference type="EMBL" id="AY256574">
    <property type="protein sequence ID" value="AAP32744.1"/>
    <property type="molecule type" value="mRNA"/>
</dbReference>
<dbReference type="EMBL" id="AY256575">
    <property type="protein sequence ID" value="AAP32745.1"/>
    <property type="molecule type" value="mRNA"/>
</dbReference>
<dbReference type="EMBL" id="AY256576">
    <property type="protein sequence ID" value="AAP32746.1"/>
    <property type="molecule type" value="mRNA"/>
</dbReference>
<dbReference type="EMBL" id="AF121352">
    <property type="protein sequence ID" value="AAD22055.1"/>
    <property type="molecule type" value="mRNA"/>
</dbReference>
<dbReference type="EMBL" id="DQ143112">
    <property type="protein sequence ID" value="ABA43362.1"/>
    <property type="molecule type" value="Genomic_DNA"/>
</dbReference>
<dbReference type="CCDS" id="CCDS51920.1">
    <molecule id="Q9WVF9-1"/>
</dbReference>
<dbReference type="CCDS" id="CCDS71844.1">
    <molecule id="Q9WVF9-2"/>
</dbReference>
<dbReference type="CCDS" id="CCDS85166.1">
    <molecule id="Q9WVF9-4"/>
</dbReference>
<dbReference type="RefSeq" id="NP_001276635.1">
    <property type="nucleotide sequence ID" value="NM_001289706.1"/>
</dbReference>
<dbReference type="RefSeq" id="NP_001276636.1">
    <molecule id="Q9WVF9-2"/>
    <property type="nucleotide sequence ID" value="NM_001289707.1"/>
</dbReference>
<dbReference type="RefSeq" id="NP_001276637.1">
    <molecule id="Q9WVF9-4"/>
    <property type="nucleotide sequence ID" value="NM_001289708.1"/>
</dbReference>
<dbReference type="RefSeq" id="NP_064653.1">
    <molecule id="Q9WVF9-1"/>
    <property type="nucleotide sequence ID" value="NM_020257.2"/>
</dbReference>
<dbReference type="PDB" id="3RS1">
    <property type="method" value="X-ray"/>
    <property type="resolution" value="1.94 A"/>
    <property type="chains" value="A/B=85-206"/>
</dbReference>
<dbReference type="PDBsum" id="3RS1"/>
<dbReference type="SMR" id="Q9WVF9"/>
<dbReference type="BioGRID" id="220229">
    <property type="interactions" value="1"/>
</dbReference>
<dbReference type="FunCoup" id="Q9WVF9">
    <property type="interactions" value="99"/>
</dbReference>
<dbReference type="STRING" id="10090.ENSMUSP00000124910"/>
<dbReference type="GlyCosmos" id="Q9WVF9">
    <property type="glycosylation" value="1 site, No reported glycans"/>
</dbReference>
<dbReference type="GlyGen" id="Q9WVF9">
    <property type="glycosylation" value="1 site"/>
</dbReference>
<dbReference type="iPTMnet" id="Q9WVF9"/>
<dbReference type="PhosphoSitePlus" id="Q9WVF9"/>
<dbReference type="PaxDb" id="10090-ENSMUSP00000123804"/>
<dbReference type="ProteomicsDB" id="283277">
    <molecule id="Q9WVF9-1"/>
</dbReference>
<dbReference type="ProteomicsDB" id="283278">
    <molecule id="Q9WVF9-2"/>
</dbReference>
<dbReference type="ProteomicsDB" id="283279">
    <molecule id="Q9WVF9-3"/>
</dbReference>
<dbReference type="ProteomicsDB" id="283280">
    <molecule id="Q9WVF9-4"/>
</dbReference>
<dbReference type="DNASU" id="93675"/>
<dbReference type="Ensembl" id="ENSMUST00000032519.12">
    <molecule id="Q9WVF9-1"/>
    <property type="protein sequence ID" value="ENSMUSP00000032519.6"/>
    <property type="gene ID" value="ENSMUSG00000030365.12"/>
</dbReference>
<dbReference type="Ensembl" id="ENSMUST00000159866.8">
    <molecule id="Q9WVF9-2"/>
    <property type="protein sequence ID" value="ENSMUSP00000123804.2"/>
    <property type="gene ID" value="ENSMUSG00000030365.12"/>
</dbReference>
<dbReference type="Ensembl" id="ENSMUST00000160867.3">
    <molecule id="Q9WVF9-4"/>
    <property type="protein sequence ID" value="ENSMUSP00000145115.2"/>
    <property type="gene ID" value="ENSMUSG00000030365.12"/>
</dbReference>
<dbReference type="GeneID" id="93675"/>
<dbReference type="KEGG" id="mmu:93675"/>
<dbReference type="UCSC" id="uc009eeu.2">
    <molecule id="Q9WVF9-1"/>
    <property type="organism name" value="mouse"/>
</dbReference>
<dbReference type="AGR" id="MGI:2136650"/>
<dbReference type="CTD" id="93675"/>
<dbReference type="MGI" id="MGI:2136650">
    <property type="gene designation" value="Clec2i"/>
</dbReference>
<dbReference type="VEuPathDB" id="HostDB:ENSMUSG00000030365"/>
<dbReference type="eggNOG" id="KOG4297">
    <property type="taxonomic scope" value="Eukaryota"/>
</dbReference>
<dbReference type="GeneTree" id="ENSGT00940000155319"/>
<dbReference type="HOGENOM" id="CLU_049894_8_1_1"/>
<dbReference type="InParanoid" id="Q9WVF9"/>
<dbReference type="OMA" id="DQPWKWP"/>
<dbReference type="OrthoDB" id="9906043at2759"/>
<dbReference type="TreeFam" id="TF351467"/>
<dbReference type="BioGRID-ORCS" id="93675">
    <property type="hits" value="1 hit in 76 CRISPR screens"/>
</dbReference>
<dbReference type="ChiTaRS" id="Clec2i">
    <property type="organism name" value="mouse"/>
</dbReference>
<dbReference type="EvolutionaryTrace" id="Q9WVF9"/>
<dbReference type="PRO" id="PR:Q9WVF9"/>
<dbReference type="Proteomes" id="UP000000589">
    <property type="component" value="Chromosome 6"/>
</dbReference>
<dbReference type="RNAct" id="Q9WVF9">
    <property type="molecule type" value="protein"/>
</dbReference>
<dbReference type="Bgee" id="ENSMUSG00000030365">
    <property type="expression patterns" value="Expressed in thymus and 37 other cell types or tissues"/>
</dbReference>
<dbReference type="ExpressionAtlas" id="Q9WVF9">
    <property type="expression patterns" value="baseline and differential"/>
</dbReference>
<dbReference type="GO" id="GO:0009986">
    <property type="term" value="C:cell surface"/>
    <property type="evidence" value="ECO:0000314"/>
    <property type="project" value="MGI"/>
</dbReference>
<dbReference type="GO" id="GO:0009897">
    <property type="term" value="C:external side of plasma membrane"/>
    <property type="evidence" value="ECO:0000314"/>
    <property type="project" value="MGI"/>
</dbReference>
<dbReference type="GO" id="GO:0030246">
    <property type="term" value="F:carbohydrate binding"/>
    <property type="evidence" value="ECO:0000250"/>
    <property type="project" value="MGI"/>
</dbReference>
<dbReference type="GO" id="GO:0046703">
    <property type="term" value="F:natural killer cell lectin-like receptor binding"/>
    <property type="evidence" value="ECO:0000314"/>
    <property type="project" value="MGI"/>
</dbReference>
<dbReference type="GO" id="GO:0004888">
    <property type="term" value="F:transmembrane signaling receptor activity"/>
    <property type="evidence" value="ECO:0000250"/>
    <property type="project" value="MGI"/>
</dbReference>
<dbReference type="GO" id="GO:0001765">
    <property type="term" value="P:membrane raft assembly"/>
    <property type="evidence" value="ECO:0000303"/>
    <property type="project" value="BHF-UCL"/>
</dbReference>
<dbReference type="GO" id="GO:0045671">
    <property type="term" value="P:negative regulation of osteoclast differentiation"/>
    <property type="evidence" value="ECO:0000303"/>
    <property type="project" value="BHF-UCL"/>
</dbReference>
<dbReference type="GO" id="GO:2000522">
    <property type="term" value="P:positive regulation of immunological synapse formation"/>
    <property type="evidence" value="ECO:0000303"/>
    <property type="project" value="BHF-UCL"/>
</dbReference>
<dbReference type="GO" id="GO:0043113">
    <property type="term" value="P:receptor clustering"/>
    <property type="evidence" value="ECO:0000315"/>
    <property type="project" value="MGI"/>
</dbReference>
<dbReference type="GO" id="GO:0030833">
    <property type="term" value="P:regulation of actin filament polymerization"/>
    <property type="evidence" value="ECO:0000315"/>
    <property type="project" value="MGI"/>
</dbReference>
<dbReference type="GO" id="GO:0032663">
    <property type="term" value="P:regulation of interleukin-2 production"/>
    <property type="evidence" value="ECO:0000315"/>
    <property type="project" value="MGI"/>
</dbReference>
<dbReference type="GO" id="GO:0042129">
    <property type="term" value="P:regulation of T cell proliferation"/>
    <property type="evidence" value="ECO:0000315"/>
    <property type="project" value="MGI"/>
</dbReference>
<dbReference type="GO" id="GO:0050852">
    <property type="term" value="P:T cell receptor signaling pathway"/>
    <property type="evidence" value="ECO:0000315"/>
    <property type="project" value="MGI"/>
</dbReference>
<dbReference type="CDD" id="cd03593">
    <property type="entry name" value="CLECT_NK_receptors_like"/>
    <property type="match status" value="1"/>
</dbReference>
<dbReference type="FunFam" id="3.10.100.10:FF:000062">
    <property type="entry name" value="C-type lectin domain family 2 member D"/>
    <property type="match status" value="1"/>
</dbReference>
<dbReference type="Gene3D" id="3.10.100.10">
    <property type="entry name" value="Mannose-Binding Protein A, subunit A"/>
    <property type="match status" value="1"/>
</dbReference>
<dbReference type="InterPro" id="IPR001304">
    <property type="entry name" value="C-type_lectin-like"/>
</dbReference>
<dbReference type="InterPro" id="IPR016186">
    <property type="entry name" value="C-type_lectin-like/link_sf"/>
</dbReference>
<dbReference type="InterPro" id="IPR050828">
    <property type="entry name" value="C-type_lectin/matrix_domain"/>
</dbReference>
<dbReference type="InterPro" id="IPR016187">
    <property type="entry name" value="CTDL_fold"/>
</dbReference>
<dbReference type="InterPro" id="IPR033992">
    <property type="entry name" value="NKR-like_CTLD"/>
</dbReference>
<dbReference type="PANTHER" id="PTHR45710:SF19">
    <property type="entry name" value="C-TYPE LECTIN DOMAIN FAMILY 2 MEMBER D-RELATED"/>
    <property type="match status" value="1"/>
</dbReference>
<dbReference type="PANTHER" id="PTHR45710">
    <property type="entry name" value="C-TYPE LECTIN DOMAIN-CONTAINING PROTEIN 180"/>
    <property type="match status" value="1"/>
</dbReference>
<dbReference type="Pfam" id="PF00059">
    <property type="entry name" value="Lectin_C"/>
    <property type="match status" value="1"/>
</dbReference>
<dbReference type="SMART" id="SM00034">
    <property type="entry name" value="CLECT"/>
    <property type="match status" value="1"/>
</dbReference>
<dbReference type="SUPFAM" id="SSF56436">
    <property type="entry name" value="C-type lectin-like"/>
    <property type="match status" value="1"/>
</dbReference>
<dbReference type="PROSITE" id="PS50041">
    <property type="entry name" value="C_TYPE_LECTIN_2"/>
    <property type="match status" value="1"/>
</dbReference>
<feature type="chain" id="PRO_0000315291" description="C-type lectin domain family 2 member I">
    <location>
        <begin position="1"/>
        <end position="217"/>
    </location>
</feature>
<feature type="topological domain" description="Cytoplasmic" evidence="2">
    <location>
        <begin position="1"/>
        <end position="53"/>
    </location>
</feature>
<feature type="transmembrane region" description="Helical; Signal-anchor for type II membrane protein" evidence="2">
    <location>
        <begin position="54"/>
        <end position="74"/>
    </location>
</feature>
<feature type="topological domain" description="Extracellular" evidence="2">
    <location>
        <begin position="75"/>
        <end position="217"/>
    </location>
</feature>
<feature type="domain" description="C-type lectin" evidence="3">
    <location>
        <begin position="99"/>
        <end position="203"/>
    </location>
</feature>
<feature type="glycosylation site" description="N-linked (GlcNAc...) asparagine" evidence="2">
    <location>
        <position position="112"/>
    </location>
</feature>
<feature type="disulfide bond" evidence="3">
    <location>
        <begin position="92"/>
        <end position="103"/>
    </location>
</feature>
<feature type="disulfide bond" evidence="3">
    <location>
        <begin position="120"/>
        <end position="202"/>
    </location>
</feature>
<feature type="splice variant" id="VSP_030530" description="In isoform 4." evidence="8">
    <location>
        <begin position="1"/>
        <end position="61"/>
    </location>
</feature>
<feature type="splice variant" id="VSP_030531" description="In isoform 3." evidence="8">
    <location>
        <begin position="1"/>
        <end position="15"/>
    </location>
</feature>
<feature type="splice variant" id="VSP_030532" description="In isoform 2 and isoform 3." evidence="7 8">
    <original>G</original>
    <variation>GVQCC</variation>
    <location>
        <position position="35"/>
    </location>
</feature>
<feature type="strand" evidence="10">
    <location>
        <begin position="87"/>
        <end position="91"/>
    </location>
</feature>
<feature type="strand" evidence="10">
    <location>
        <begin position="97"/>
        <end position="99"/>
    </location>
</feature>
<feature type="strand" evidence="10">
    <location>
        <begin position="102"/>
        <end position="106"/>
    </location>
</feature>
<feature type="helix" evidence="10">
    <location>
        <begin position="113"/>
        <end position="122"/>
    </location>
</feature>
<feature type="helix" evidence="10">
    <location>
        <begin position="133"/>
        <end position="142"/>
    </location>
</feature>
<feature type="turn" evidence="10">
    <location>
        <begin position="143"/>
        <end position="145"/>
    </location>
</feature>
<feature type="strand" evidence="10">
    <location>
        <begin position="148"/>
        <end position="153"/>
    </location>
</feature>
<feature type="strand" evidence="10">
    <location>
        <begin position="180"/>
        <end position="185"/>
    </location>
</feature>
<feature type="strand" evidence="10">
    <location>
        <begin position="188"/>
        <end position="192"/>
    </location>
</feature>
<feature type="strand" evidence="10">
    <location>
        <begin position="200"/>
        <end position="205"/>
    </location>
</feature>
<name>CLC2I_MOUSE</name>
<reference key="1">
    <citation type="journal article" date="2001" name="Immunogenetics">
        <title>Cloning of Clr, a new family of lectin-like genes localized between mouse Nkrp1a and Cd69.</title>
        <authorList>
            <person name="Plougastel B."/>
            <person name="Dubbelde C."/>
            <person name="Yokoyama W.M."/>
        </authorList>
    </citation>
    <scope>NUCLEOTIDE SEQUENCE [MRNA] (ISOFORM 1)</scope>
    <scope>TISSUE SPECIFICITY</scope>
    <source>
        <strain>C57BL/6J</strain>
        <tissue>Natural killer cell</tissue>
    </source>
</reference>
<reference key="2">
    <citation type="journal article" date="2002" name="J. Biol. Chem.">
        <title>Osteoclast inhibitory lectin, a family of new osteoclast inhibitors.</title>
        <authorList>
            <person name="Zhou H."/>
            <person name="Kartsogiannis V."/>
            <person name="Quinn J.M.W."/>
            <person name="Ly C."/>
            <person name="Gange C."/>
            <person name="Elliott J."/>
            <person name="Ng K.W."/>
            <person name="Gillespie M.T."/>
        </authorList>
    </citation>
    <scope>NUCLEOTIDE SEQUENCE [GENOMIC DNA / MRNA] (ISOFORMS 1 AND 2)</scope>
    <scope>FUNCTION</scope>
    <scope>INDUCTION</scope>
    <scope>TISSUE SPECIFICITY</scope>
    <source>
        <strain>129/Sv</strain>
        <strain>C57BL/6J</strain>
    </source>
</reference>
<reference key="3">
    <citation type="journal article" date="2005" name="Cell. Immunol.">
        <title>C-type lectin OCILRP2/Clr-g and its ligand NKRP1f costimulate T cell proliferation and IL-2 production.</title>
        <authorList>
            <person name="Tian W."/>
            <person name="Nunez R."/>
            <person name="Cheng S."/>
            <person name="Ding Y."/>
            <person name="Tumang J."/>
            <person name="Lyddane C."/>
            <person name="Roman C."/>
            <person name="Liou H.-C."/>
        </authorList>
    </citation>
    <scope>NUCLEOTIDE SEQUENCE [MRNA] (ISOFORMS 2; 3 AND 4)</scope>
    <scope>FUNCTION</scope>
    <scope>SUBCELLULAR LOCATION</scope>
    <scope>INDUCTION</scope>
    <scope>TISSUE SPECIFICITY</scope>
    <source>
        <strain>C57BL/6J</strain>
        <tissue>Spleen</tissue>
    </source>
</reference>
<reference key="4">
    <citation type="submission" date="1999-01" db="EMBL/GenBank/DDBJ databases">
        <title>A novel c-type lectin (DCL1) expressed in bone marrow derived dendritic cells.</title>
        <authorList>
            <person name="Gorski K.S."/>
            <person name="Huang X."/>
            <person name="Pardoll D.M."/>
            <person name="Tsuchiya H."/>
        </authorList>
    </citation>
    <scope>NUCLEOTIDE SEQUENCE [MRNA] (ISOFORM 1)</scope>
    <source>
        <strain>BALB/cJ</strain>
        <tissue>Dendritic cell</tissue>
    </source>
</reference>
<reference key="5">
    <citation type="journal article" date="2006" name="J. Immunol.">
        <title>Molecular and genetic basis for strain-dependent NK1.1 alloreactivity of mouse NK cells.</title>
        <authorList>
            <person name="Carlyle J.R."/>
            <person name="Mesci A."/>
            <person name="Ljutic B."/>
            <person name="Belanger S."/>
            <person name="Tai L.-H."/>
            <person name="Rousselle E."/>
            <person name="Troke A.D."/>
            <person name="Proteau M.-F."/>
            <person name="Makrigiannis A.P."/>
        </authorList>
    </citation>
    <scope>NUCLEOTIDE SEQUENCE [GENOMIC DNA] OF 78-171</scope>
    <source>
        <strain>BALB/cByJ</strain>
    </source>
</reference>
<protein>
    <recommendedName>
        <fullName>C-type lectin domain family 2 member I</fullName>
    </recommendedName>
    <alternativeName>
        <fullName>C-type lectin-related protein DCL1</fullName>
    </alternativeName>
    <alternativeName>
        <fullName>C-type lectin-related protein G</fullName>
        <shortName>Clr-g</shortName>
    </alternativeName>
    <alternativeName>
        <fullName>Lymphoid-derived C-type lectin-1</fullName>
        <shortName>LCL-1</shortName>
    </alternativeName>
    <alternativeName>
        <fullName>Osteoclast inhibitory lectin-related protein 2</fullName>
        <shortName>Ocil-related protein 2</shortName>
    </alternativeName>
</protein>
<accession>Q9WVF9</accession>
<accession>Q1AFZ2</accession>
<accession>Q7TSP6</accession>
<accession>Q7TSP7</accession>
<accession>Q8BFR3</accession>
<accession>Q924B1</accession>
<proteinExistence type="evidence at protein level"/>
<organism>
    <name type="scientific">Mus musculus</name>
    <name type="common">Mouse</name>
    <dbReference type="NCBI Taxonomy" id="10090"/>
    <lineage>
        <taxon>Eukaryota</taxon>
        <taxon>Metazoa</taxon>
        <taxon>Chordata</taxon>
        <taxon>Craniata</taxon>
        <taxon>Vertebrata</taxon>
        <taxon>Euteleostomi</taxon>
        <taxon>Mammalia</taxon>
        <taxon>Eutheria</taxon>
        <taxon>Euarchontoglires</taxon>
        <taxon>Glires</taxon>
        <taxon>Rodentia</taxon>
        <taxon>Myomorpha</taxon>
        <taxon>Muroidea</taxon>
        <taxon>Muridae</taxon>
        <taxon>Murinae</taxon>
        <taxon>Mus</taxon>
        <taxon>Mus</taxon>
    </lineage>
</organism>
<gene>
    <name type="primary">Clec2i</name>
    <name type="synonym">Clrg</name>
    <name type="synonym">Dcl1</name>
    <name type="synonym">Ocilrp2</name>
</gene>
<evidence type="ECO:0000250" key="1"/>
<evidence type="ECO:0000255" key="2"/>
<evidence type="ECO:0000255" key="3">
    <source>
        <dbReference type="PROSITE-ProRule" id="PRU00040"/>
    </source>
</evidence>
<evidence type="ECO:0000269" key="4">
    <source>
    </source>
</evidence>
<evidence type="ECO:0000269" key="5">
    <source>
    </source>
</evidence>
<evidence type="ECO:0000269" key="6">
    <source>
    </source>
</evidence>
<evidence type="ECO:0000303" key="7">
    <source>
    </source>
</evidence>
<evidence type="ECO:0000303" key="8">
    <source>
    </source>
</evidence>
<evidence type="ECO:0000305" key="9"/>
<evidence type="ECO:0007829" key="10">
    <source>
        <dbReference type="PDB" id="3RS1"/>
    </source>
</evidence>
<keyword id="KW-0002">3D-structure</keyword>
<keyword id="KW-0025">Alternative splicing</keyword>
<keyword id="KW-1003">Cell membrane</keyword>
<keyword id="KW-1015">Disulfide bond</keyword>
<keyword id="KW-0325">Glycoprotein</keyword>
<keyword id="KW-0430">Lectin</keyword>
<keyword id="KW-0472">Membrane</keyword>
<keyword id="KW-0675">Receptor</keyword>
<keyword id="KW-1185">Reference proteome</keyword>
<keyword id="KW-0735">Signal-anchor</keyword>
<keyword id="KW-0812">Transmembrane</keyword>
<keyword id="KW-1133">Transmembrane helix</keyword>
<comment type="function">
    <text evidence="5 6">Inhibits osteoclast formation. Receptor for KLRB1F. Enhances T-cell activation. Plays a role in splenocyte activation, T-cell responses and IL-2 production.</text>
</comment>
<comment type="subcellular location">
    <subcellularLocation>
        <location evidence="1">Cell membrane</location>
        <topology evidence="1">Single-pass type II membrane protein</topology>
    </subcellularLocation>
</comment>
<comment type="alternative products">
    <event type="alternative splicing"/>
    <isoform>
        <id>Q9WVF9-1</id>
        <name>1</name>
        <sequence type="displayed"/>
    </isoform>
    <isoform>
        <id>Q9WVF9-2</id>
        <name>2</name>
        <name>Lymphoid-derived C-type lectin-1b</name>
        <name>LCL-1b</name>
        <sequence type="described" ref="VSP_030532"/>
    </isoform>
    <isoform>
        <id>Q9WVF9-3</id>
        <name>3</name>
        <name>Lymphoid-derived C-type lectin-1a</name>
        <name>LCL-1a</name>
        <sequence type="described" ref="VSP_030531 VSP_030532"/>
    </isoform>
    <isoform>
        <id>Q9WVF9-4</id>
        <name>4</name>
        <name>Lymphoid-derived C-type lectin-1c</name>
        <name>LCL-1c</name>
        <sequence type="described" ref="VSP_030530"/>
    </isoform>
</comment>
<comment type="tissue specificity">
    <text evidence="4 5 6">Detected in osteoblasts, growth plate chondrocytes and skeletal muscle overlying the bone (at protein level). Detected in spleen, B-cells, dendritic cells, thymus, and in IL2-activated natural killer cells.</text>
</comment>
<comment type="induction">
    <text evidence="5 6">Up-regulated in CD4(+) T-cells upon stimulation with CD3-ligands. Up-regulated in cultured calvarial osteoblasts by 1,25-dihydroxyvitamin D3. Constitutively expressed in cultured bone marrow cells during osteoclast formation.</text>
</comment>
<comment type="sequence caution" evidence="9">
    <conflict type="erroneous initiation">
        <sequence resource="EMBL-CDS" id="AAK70359"/>
    </conflict>
</comment>